<proteinExistence type="evidence at transcript level"/>
<feature type="chain" id="PRO_0000051868" description="Cytochrome P450 6a9">
    <location>
        <begin position="1"/>
        <end position="504"/>
    </location>
</feature>
<feature type="binding site" description="axial binding residue" evidence="1">
    <location>
        <position position="449"/>
    </location>
    <ligand>
        <name>heme</name>
        <dbReference type="ChEBI" id="CHEBI:30413"/>
    </ligand>
    <ligandPart>
        <name>Fe</name>
        <dbReference type="ChEBI" id="CHEBI:18248"/>
    </ligandPart>
</feature>
<feature type="sequence conflict" description="In Ref. 1; AAB46609 and 4; AAM51056." evidence="3" ref="1 4">
    <original>Y</original>
    <variation>S</variation>
    <location>
        <position position="137"/>
    </location>
</feature>
<feature type="sequence conflict" description="In Ref. 1; AAB46609." evidence="3" ref="1">
    <original>V</original>
    <variation>D</variation>
    <location>
        <position position="376"/>
    </location>
</feature>
<feature type="sequence conflict" description="In Ref. 1; AAB46609." evidence="3" ref="1">
    <original>DNFSPERVKER</original>
    <variation>IFFARTSEGS</variation>
    <location>
        <begin position="424"/>
        <end position="434"/>
    </location>
</feature>
<feature type="sequence conflict" description="In Ref. 1; AAB46609." evidence="3" ref="1">
    <original>N</original>
    <variation>L</variation>
    <location>
        <position position="448"/>
    </location>
</feature>
<feature type="sequence conflict" description="In Ref. 4; AAM51056." evidence="3" ref="4">
    <original>S</original>
    <variation>I</variation>
    <location>
        <position position="461"/>
    </location>
</feature>
<dbReference type="EC" id="1.14.-.-"/>
<dbReference type="EMBL" id="L46860">
    <property type="protein sequence ID" value="AAB46609.1"/>
    <property type="status" value="ALT_INIT"/>
    <property type="molecule type" value="mRNA"/>
</dbReference>
<dbReference type="EMBL" id="AE013599">
    <property type="protein sequence ID" value="AAF58188.2"/>
    <property type="molecule type" value="Genomic_DNA"/>
</dbReference>
<dbReference type="EMBL" id="AY119196">
    <property type="protein sequence ID" value="AAM51056.1"/>
    <property type="molecule type" value="mRNA"/>
</dbReference>
<dbReference type="PIR" id="JC5321">
    <property type="entry name" value="JC5321"/>
</dbReference>
<dbReference type="RefSeq" id="NP_523748.2">
    <property type="nucleotide sequence ID" value="NM_079024.3"/>
</dbReference>
<dbReference type="SMR" id="Q27594"/>
<dbReference type="BioGRID" id="62405">
    <property type="interactions" value="6"/>
</dbReference>
<dbReference type="FunCoup" id="Q27594">
    <property type="interactions" value="96"/>
</dbReference>
<dbReference type="IntAct" id="Q27594">
    <property type="interactions" value="5"/>
</dbReference>
<dbReference type="STRING" id="7227.FBpp0289405"/>
<dbReference type="PaxDb" id="7227-FBpp0289405"/>
<dbReference type="EnsemblMetazoa" id="FBtr0300128">
    <property type="protein sequence ID" value="FBpp0289405"/>
    <property type="gene ID" value="FBgn0013771"/>
</dbReference>
<dbReference type="GeneID" id="36663"/>
<dbReference type="KEGG" id="dme:Dmel_CG10246"/>
<dbReference type="AGR" id="FB:FBgn0013771"/>
<dbReference type="CTD" id="36663"/>
<dbReference type="FlyBase" id="FBgn0013771">
    <property type="gene designation" value="Cyp6a9"/>
</dbReference>
<dbReference type="VEuPathDB" id="VectorBase:FBgn0013771"/>
<dbReference type="eggNOG" id="KOG0158">
    <property type="taxonomic scope" value="Eukaryota"/>
</dbReference>
<dbReference type="GeneTree" id="ENSGT00940000165972"/>
<dbReference type="HOGENOM" id="CLU_001570_5_2_1"/>
<dbReference type="InParanoid" id="Q27594"/>
<dbReference type="OMA" id="HMKITLE"/>
<dbReference type="OrthoDB" id="2789670at2759"/>
<dbReference type="PhylomeDB" id="Q27594"/>
<dbReference type="SignaLink" id="Q27594"/>
<dbReference type="BioGRID-ORCS" id="36663">
    <property type="hits" value="0 hits in 3 CRISPR screens"/>
</dbReference>
<dbReference type="GenomeRNAi" id="36663"/>
<dbReference type="PRO" id="PR:Q27594"/>
<dbReference type="Proteomes" id="UP000000803">
    <property type="component" value="Chromosome 2R"/>
</dbReference>
<dbReference type="Bgee" id="FBgn0013771">
    <property type="expression patterns" value="Expressed in adult Malpighian tubule (Drosophila) and 62 other cell types or tissues"/>
</dbReference>
<dbReference type="GO" id="GO:0005789">
    <property type="term" value="C:endoplasmic reticulum membrane"/>
    <property type="evidence" value="ECO:0007669"/>
    <property type="project" value="UniProtKB-SubCell"/>
</dbReference>
<dbReference type="GO" id="GO:0020037">
    <property type="term" value="F:heme binding"/>
    <property type="evidence" value="ECO:0007669"/>
    <property type="project" value="InterPro"/>
</dbReference>
<dbReference type="GO" id="GO:0005506">
    <property type="term" value="F:iron ion binding"/>
    <property type="evidence" value="ECO:0007669"/>
    <property type="project" value="InterPro"/>
</dbReference>
<dbReference type="GO" id="GO:0004497">
    <property type="term" value="F:monooxygenase activity"/>
    <property type="evidence" value="ECO:0007669"/>
    <property type="project" value="UniProtKB-KW"/>
</dbReference>
<dbReference type="GO" id="GO:0016705">
    <property type="term" value="F:oxidoreductase activity, acting on paired donors, with incorporation or reduction of molecular oxygen"/>
    <property type="evidence" value="ECO:0007669"/>
    <property type="project" value="InterPro"/>
</dbReference>
<dbReference type="CDD" id="cd11056">
    <property type="entry name" value="CYP6-like"/>
    <property type="match status" value="1"/>
</dbReference>
<dbReference type="FunFam" id="1.10.630.10:FF:000042">
    <property type="entry name" value="Cytochrome P450"/>
    <property type="match status" value="1"/>
</dbReference>
<dbReference type="Gene3D" id="1.10.630.10">
    <property type="entry name" value="Cytochrome P450"/>
    <property type="match status" value="1"/>
</dbReference>
<dbReference type="InterPro" id="IPR001128">
    <property type="entry name" value="Cyt_P450"/>
</dbReference>
<dbReference type="InterPro" id="IPR017972">
    <property type="entry name" value="Cyt_P450_CS"/>
</dbReference>
<dbReference type="InterPro" id="IPR002401">
    <property type="entry name" value="Cyt_P450_E_grp-I"/>
</dbReference>
<dbReference type="InterPro" id="IPR036396">
    <property type="entry name" value="Cyt_P450_sf"/>
</dbReference>
<dbReference type="InterPro" id="IPR050476">
    <property type="entry name" value="Insect_CytP450_Detox"/>
</dbReference>
<dbReference type="PANTHER" id="PTHR24292">
    <property type="entry name" value="CYTOCHROME P450"/>
    <property type="match status" value="1"/>
</dbReference>
<dbReference type="PANTHER" id="PTHR24292:SF100">
    <property type="entry name" value="CYTOCHROME P450 6A16, ISOFORM B-RELATED"/>
    <property type="match status" value="1"/>
</dbReference>
<dbReference type="Pfam" id="PF00067">
    <property type="entry name" value="p450"/>
    <property type="match status" value="1"/>
</dbReference>
<dbReference type="PRINTS" id="PR00463">
    <property type="entry name" value="EP450I"/>
</dbReference>
<dbReference type="PRINTS" id="PR00385">
    <property type="entry name" value="P450"/>
</dbReference>
<dbReference type="SUPFAM" id="SSF48264">
    <property type="entry name" value="Cytochrome P450"/>
    <property type="match status" value="1"/>
</dbReference>
<dbReference type="PROSITE" id="PS00086">
    <property type="entry name" value="CYTOCHROME_P450"/>
    <property type="match status" value="1"/>
</dbReference>
<comment type="function">
    <text evidence="2">Involved in the metabolism of insect hormones and in the breakdown of synthetic insecticides.</text>
</comment>
<comment type="cofactor">
    <cofactor evidence="1">
        <name>heme</name>
        <dbReference type="ChEBI" id="CHEBI:30413"/>
    </cofactor>
</comment>
<comment type="subcellular location">
    <subcellularLocation>
        <location evidence="3">Endoplasmic reticulum membrane</location>
        <topology evidence="3">Peripheral membrane protein</topology>
    </subcellularLocation>
    <subcellularLocation>
        <location evidence="3">Microsome membrane</location>
        <topology evidence="3">Peripheral membrane protein</topology>
    </subcellularLocation>
</comment>
<comment type="similarity">
    <text evidence="3">Belongs to the cytochrome P450 family.</text>
</comment>
<comment type="sequence caution" evidence="3">
    <conflict type="erroneous initiation">
        <sequence resource="EMBL-CDS" id="AAB46609"/>
    </conflict>
</comment>
<protein>
    <recommendedName>
        <fullName>Cytochrome P450 6a9</fullName>
        <ecNumber>1.14.-.-</ecNumber>
    </recommendedName>
    <alternativeName>
        <fullName>CYPVIA9</fullName>
    </alternativeName>
</protein>
<reference key="1">
    <citation type="journal article" date="1996" name="Gene">
        <title>Three second chromosome-linked clustered Cyp6 genes show differential constitutive and barbital-induced expression in DDT-resistant and susceptible strains of Drosophila melanogaster.</title>
        <authorList>
            <person name="Maitra S."/>
            <person name="Dombrowski S.M."/>
            <person name="Waters L.C."/>
            <person name="Ganguly R."/>
        </authorList>
    </citation>
    <scope>NUCLEOTIDE SEQUENCE [MRNA]</scope>
    <scope>FUNCTION</scope>
    <source>
        <strain>91-R</strain>
    </source>
</reference>
<reference key="2">
    <citation type="journal article" date="2000" name="Science">
        <title>The genome sequence of Drosophila melanogaster.</title>
        <authorList>
            <person name="Adams M.D."/>
            <person name="Celniker S.E."/>
            <person name="Holt R.A."/>
            <person name="Evans C.A."/>
            <person name="Gocayne J.D."/>
            <person name="Amanatides P.G."/>
            <person name="Scherer S.E."/>
            <person name="Li P.W."/>
            <person name="Hoskins R.A."/>
            <person name="Galle R.F."/>
            <person name="George R.A."/>
            <person name="Lewis S.E."/>
            <person name="Richards S."/>
            <person name="Ashburner M."/>
            <person name="Henderson S.N."/>
            <person name="Sutton G.G."/>
            <person name="Wortman J.R."/>
            <person name="Yandell M.D."/>
            <person name="Zhang Q."/>
            <person name="Chen L.X."/>
            <person name="Brandon R.C."/>
            <person name="Rogers Y.-H.C."/>
            <person name="Blazej R.G."/>
            <person name="Champe M."/>
            <person name="Pfeiffer B.D."/>
            <person name="Wan K.H."/>
            <person name="Doyle C."/>
            <person name="Baxter E.G."/>
            <person name="Helt G."/>
            <person name="Nelson C.R."/>
            <person name="Miklos G.L.G."/>
            <person name="Abril J.F."/>
            <person name="Agbayani A."/>
            <person name="An H.-J."/>
            <person name="Andrews-Pfannkoch C."/>
            <person name="Baldwin D."/>
            <person name="Ballew R.M."/>
            <person name="Basu A."/>
            <person name="Baxendale J."/>
            <person name="Bayraktaroglu L."/>
            <person name="Beasley E.M."/>
            <person name="Beeson K.Y."/>
            <person name="Benos P.V."/>
            <person name="Berman B.P."/>
            <person name="Bhandari D."/>
            <person name="Bolshakov S."/>
            <person name="Borkova D."/>
            <person name="Botchan M.R."/>
            <person name="Bouck J."/>
            <person name="Brokstein P."/>
            <person name="Brottier P."/>
            <person name="Burtis K.C."/>
            <person name="Busam D.A."/>
            <person name="Butler H."/>
            <person name="Cadieu E."/>
            <person name="Center A."/>
            <person name="Chandra I."/>
            <person name="Cherry J.M."/>
            <person name="Cawley S."/>
            <person name="Dahlke C."/>
            <person name="Davenport L.B."/>
            <person name="Davies P."/>
            <person name="de Pablos B."/>
            <person name="Delcher A."/>
            <person name="Deng Z."/>
            <person name="Mays A.D."/>
            <person name="Dew I."/>
            <person name="Dietz S.M."/>
            <person name="Dodson K."/>
            <person name="Doup L.E."/>
            <person name="Downes M."/>
            <person name="Dugan-Rocha S."/>
            <person name="Dunkov B.C."/>
            <person name="Dunn P."/>
            <person name="Durbin K.J."/>
            <person name="Evangelista C.C."/>
            <person name="Ferraz C."/>
            <person name="Ferriera S."/>
            <person name="Fleischmann W."/>
            <person name="Fosler C."/>
            <person name="Gabrielian A.E."/>
            <person name="Garg N.S."/>
            <person name="Gelbart W.M."/>
            <person name="Glasser K."/>
            <person name="Glodek A."/>
            <person name="Gong F."/>
            <person name="Gorrell J.H."/>
            <person name="Gu Z."/>
            <person name="Guan P."/>
            <person name="Harris M."/>
            <person name="Harris N.L."/>
            <person name="Harvey D.A."/>
            <person name="Heiman T.J."/>
            <person name="Hernandez J.R."/>
            <person name="Houck J."/>
            <person name="Hostin D."/>
            <person name="Houston K.A."/>
            <person name="Howland T.J."/>
            <person name="Wei M.-H."/>
            <person name="Ibegwam C."/>
            <person name="Jalali M."/>
            <person name="Kalush F."/>
            <person name="Karpen G.H."/>
            <person name="Ke Z."/>
            <person name="Kennison J.A."/>
            <person name="Ketchum K.A."/>
            <person name="Kimmel B.E."/>
            <person name="Kodira C.D."/>
            <person name="Kraft C.L."/>
            <person name="Kravitz S."/>
            <person name="Kulp D."/>
            <person name="Lai Z."/>
            <person name="Lasko P."/>
            <person name="Lei Y."/>
            <person name="Levitsky A.A."/>
            <person name="Li J.H."/>
            <person name="Li Z."/>
            <person name="Liang Y."/>
            <person name="Lin X."/>
            <person name="Liu X."/>
            <person name="Mattei B."/>
            <person name="McIntosh T.C."/>
            <person name="McLeod M.P."/>
            <person name="McPherson D."/>
            <person name="Merkulov G."/>
            <person name="Milshina N.V."/>
            <person name="Mobarry C."/>
            <person name="Morris J."/>
            <person name="Moshrefi A."/>
            <person name="Mount S.M."/>
            <person name="Moy M."/>
            <person name="Murphy B."/>
            <person name="Murphy L."/>
            <person name="Muzny D.M."/>
            <person name="Nelson D.L."/>
            <person name="Nelson D.R."/>
            <person name="Nelson K.A."/>
            <person name="Nixon K."/>
            <person name="Nusskern D.R."/>
            <person name="Pacleb J.M."/>
            <person name="Palazzolo M."/>
            <person name="Pittman G.S."/>
            <person name="Pan S."/>
            <person name="Pollard J."/>
            <person name="Puri V."/>
            <person name="Reese M.G."/>
            <person name="Reinert K."/>
            <person name="Remington K."/>
            <person name="Saunders R.D.C."/>
            <person name="Scheeler F."/>
            <person name="Shen H."/>
            <person name="Shue B.C."/>
            <person name="Siden-Kiamos I."/>
            <person name="Simpson M."/>
            <person name="Skupski M.P."/>
            <person name="Smith T.J."/>
            <person name="Spier E."/>
            <person name="Spradling A.C."/>
            <person name="Stapleton M."/>
            <person name="Strong R."/>
            <person name="Sun E."/>
            <person name="Svirskas R."/>
            <person name="Tector C."/>
            <person name="Turner R."/>
            <person name="Venter E."/>
            <person name="Wang A.H."/>
            <person name="Wang X."/>
            <person name="Wang Z.-Y."/>
            <person name="Wassarman D.A."/>
            <person name="Weinstock G.M."/>
            <person name="Weissenbach J."/>
            <person name="Williams S.M."/>
            <person name="Woodage T."/>
            <person name="Worley K.C."/>
            <person name="Wu D."/>
            <person name="Yang S."/>
            <person name="Yao Q.A."/>
            <person name="Ye J."/>
            <person name="Yeh R.-F."/>
            <person name="Zaveri J.S."/>
            <person name="Zhan M."/>
            <person name="Zhang G."/>
            <person name="Zhao Q."/>
            <person name="Zheng L."/>
            <person name="Zheng X.H."/>
            <person name="Zhong F.N."/>
            <person name="Zhong W."/>
            <person name="Zhou X."/>
            <person name="Zhu S.C."/>
            <person name="Zhu X."/>
            <person name="Smith H.O."/>
            <person name="Gibbs R.A."/>
            <person name="Myers E.W."/>
            <person name="Rubin G.M."/>
            <person name="Venter J.C."/>
        </authorList>
    </citation>
    <scope>NUCLEOTIDE SEQUENCE [LARGE SCALE GENOMIC DNA]</scope>
    <source>
        <strain>Berkeley</strain>
    </source>
</reference>
<reference key="3">
    <citation type="journal article" date="2002" name="Genome Biol.">
        <title>Annotation of the Drosophila melanogaster euchromatic genome: a systematic review.</title>
        <authorList>
            <person name="Misra S."/>
            <person name="Crosby M.A."/>
            <person name="Mungall C.J."/>
            <person name="Matthews B.B."/>
            <person name="Campbell K.S."/>
            <person name="Hradecky P."/>
            <person name="Huang Y."/>
            <person name="Kaminker J.S."/>
            <person name="Millburn G.H."/>
            <person name="Prochnik S.E."/>
            <person name="Smith C.D."/>
            <person name="Tupy J.L."/>
            <person name="Whitfield E.J."/>
            <person name="Bayraktaroglu L."/>
            <person name="Berman B.P."/>
            <person name="Bettencourt B.R."/>
            <person name="Celniker S.E."/>
            <person name="de Grey A.D.N.J."/>
            <person name="Drysdale R.A."/>
            <person name="Harris N.L."/>
            <person name="Richter J."/>
            <person name="Russo S."/>
            <person name="Schroeder A.J."/>
            <person name="Shu S.Q."/>
            <person name="Stapleton M."/>
            <person name="Yamada C."/>
            <person name="Ashburner M."/>
            <person name="Gelbart W.M."/>
            <person name="Rubin G.M."/>
            <person name="Lewis S.E."/>
        </authorList>
    </citation>
    <scope>GENOME REANNOTATION</scope>
    <source>
        <strain>Berkeley</strain>
    </source>
</reference>
<reference key="4">
    <citation type="journal article" date="2002" name="Genome Biol.">
        <title>A Drosophila full-length cDNA resource.</title>
        <authorList>
            <person name="Stapleton M."/>
            <person name="Carlson J.W."/>
            <person name="Brokstein P."/>
            <person name="Yu C."/>
            <person name="Champe M."/>
            <person name="George R.A."/>
            <person name="Guarin H."/>
            <person name="Kronmiller B."/>
            <person name="Pacleb J.M."/>
            <person name="Park S."/>
            <person name="Wan K.H."/>
            <person name="Rubin G.M."/>
            <person name="Celniker S.E."/>
        </authorList>
    </citation>
    <scope>NUCLEOTIDE SEQUENCE [LARGE SCALE MRNA]</scope>
    <source>
        <strain>Berkeley</strain>
        <tissue>Embryo</tissue>
    </source>
</reference>
<evidence type="ECO:0000250" key="1"/>
<evidence type="ECO:0000269" key="2">
    <source>
    </source>
</evidence>
<evidence type="ECO:0000305" key="3"/>
<keyword id="KW-0256">Endoplasmic reticulum</keyword>
<keyword id="KW-0349">Heme</keyword>
<keyword id="KW-0408">Iron</keyword>
<keyword id="KW-0472">Membrane</keyword>
<keyword id="KW-0479">Metal-binding</keyword>
<keyword id="KW-0492">Microsome</keyword>
<keyword id="KW-0503">Monooxygenase</keyword>
<keyword id="KW-0560">Oxidoreductase</keyword>
<keyword id="KW-1185">Reference proteome</keyword>
<gene>
    <name type="primary">Cyp6a9</name>
    <name type="ORF">CG10246</name>
</gene>
<accession>Q27594</accession>
<accession>Q8MRY8</accession>
<accession>Q9V772</accession>
<organism>
    <name type="scientific">Drosophila melanogaster</name>
    <name type="common">Fruit fly</name>
    <dbReference type="NCBI Taxonomy" id="7227"/>
    <lineage>
        <taxon>Eukaryota</taxon>
        <taxon>Metazoa</taxon>
        <taxon>Ecdysozoa</taxon>
        <taxon>Arthropoda</taxon>
        <taxon>Hexapoda</taxon>
        <taxon>Insecta</taxon>
        <taxon>Pterygota</taxon>
        <taxon>Neoptera</taxon>
        <taxon>Endopterygota</taxon>
        <taxon>Diptera</taxon>
        <taxon>Brachycera</taxon>
        <taxon>Muscomorpha</taxon>
        <taxon>Ephydroidea</taxon>
        <taxon>Drosophilidae</taxon>
        <taxon>Drosophila</taxon>
        <taxon>Sophophora</taxon>
    </lineage>
</organism>
<sequence length="504" mass="58005">MGVYSVLLAIVVVLVGYLLLKWRRALHYWQNLDIPCEEPHILMGSLTGVQTSRSFSAIWMDYYNKFRGTGPFAGFYWFQRPGILVLDISLAKLILIKEFNKFTDRGFYHNTEDDPLSGQLFLLDGQKWKSMRSKLSYTFTSGKMKYMFPTVVKVGHEFIEVFGQAMEKSPIVEVRDILARFTTDVIGTCAFGIECSSLKDPEAEFRVMGRRAIFEQRHGPIGIAFINSFQNLARRLHMKITLEEAEHFFLRIVRETVAFREKNNIRRNDFMDQLIDLKNSPLTKSESGESVNLTIEEMAAQAFVFFGAGFETSSTTMGFALYELAQHQDIQDRVRKECQEVIGKYNGEITYESMKDMVYLDQVISETLRLYTVLPVLNRECLEDYEVPGHPKYVIKKGMPVLIPCGAMHRDEKLYANPNTFNPDNFSPERVKERDSVEWLPFGDGPRNCIGMRFGQMQARSGLALLINRFKFSVCEQTTIPIVYSKKTFLISSETGIFLKVERV</sequence>
<name>CP6A9_DROME</name>